<feature type="chain" id="PRO_1000213883" description="Carbamoyl phosphate synthase large chain">
    <location>
        <begin position="1"/>
        <end position="1051"/>
    </location>
</feature>
<feature type="domain" description="ATP-grasp 1" evidence="1">
    <location>
        <begin position="131"/>
        <end position="325"/>
    </location>
</feature>
<feature type="domain" description="ATP-grasp 2" evidence="1">
    <location>
        <begin position="673"/>
        <end position="863"/>
    </location>
</feature>
<feature type="domain" description="MGS-like" evidence="1">
    <location>
        <begin position="930"/>
        <end position="1051"/>
    </location>
</feature>
<feature type="region of interest" description="Carboxyphosphate synthetic domain" evidence="1">
    <location>
        <begin position="1"/>
        <end position="399"/>
    </location>
</feature>
<feature type="region of interest" description="Oligomerization domain" evidence="1">
    <location>
        <begin position="400"/>
        <end position="548"/>
    </location>
</feature>
<feature type="region of interest" description="Carbamoyl phosphate synthetic domain" evidence="1">
    <location>
        <begin position="549"/>
        <end position="930"/>
    </location>
</feature>
<feature type="region of interest" description="Allosteric domain" evidence="1">
    <location>
        <begin position="931"/>
        <end position="1051"/>
    </location>
</feature>
<feature type="binding site" evidence="1">
    <location>
        <position position="127"/>
    </location>
    <ligand>
        <name>ATP</name>
        <dbReference type="ChEBI" id="CHEBI:30616"/>
        <label>1</label>
    </ligand>
</feature>
<feature type="binding site" evidence="1">
    <location>
        <position position="167"/>
    </location>
    <ligand>
        <name>ATP</name>
        <dbReference type="ChEBI" id="CHEBI:30616"/>
        <label>1</label>
    </ligand>
</feature>
<feature type="binding site" evidence="1">
    <location>
        <position position="173"/>
    </location>
    <ligand>
        <name>ATP</name>
        <dbReference type="ChEBI" id="CHEBI:30616"/>
        <label>1</label>
    </ligand>
</feature>
<feature type="binding site" evidence="1">
    <location>
        <position position="174"/>
    </location>
    <ligand>
        <name>ATP</name>
        <dbReference type="ChEBI" id="CHEBI:30616"/>
        <label>1</label>
    </ligand>
</feature>
<feature type="binding site" evidence="1">
    <location>
        <position position="206"/>
    </location>
    <ligand>
        <name>ATP</name>
        <dbReference type="ChEBI" id="CHEBI:30616"/>
        <label>1</label>
    </ligand>
</feature>
<feature type="binding site" evidence="1">
    <location>
        <position position="208"/>
    </location>
    <ligand>
        <name>ATP</name>
        <dbReference type="ChEBI" id="CHEBI:30616"/>
        <label>1</label>
    </ligand>
</feature>
<feature type="binding site" evidence="1">
    <location>
        <position position="213"/>
    </location>
    <ligand>
        <name>ATP</name>
        <dbReference type="ChEBI" id="CHEBI:30616"/>
        <label>1</label>
    </ligand>
</feature>
<feature type="binding site" evidence="1">
    <location>
        <position position="239"/>
    </location>
    <ligand>
        <name>ATP</name>
        <dbReference type="ChEBI" id="CHEBI:30616"/>
        <label>1</label>
    </ligand>
</feature>
<feature type="binding site" evidence="1">
    <location>
        <position position="240"/>
    </location>
    <ligand>
        <name>ATP</name>
        <dbReference type="ChEBI" id="CHEBI:30616"/>
        <label>1</label>
    </ligand>
</feature>
<feature type="binding site" evidence="1">
    <location>
        <position position="241"/>
    </location>
    <ligand>
        <name>ATP</name>
        <dbReference type="ChEBI" id="CHEBI:30616"/>
        <label>1</label>
    </ligand>
</feature>
<feature type="binding site" evidence="1">
    <location>
        <position position="282"/>
    </location>
    <ligand>
        <name>ATP</name>
        <dbReference type="ChEBI" id="CHEBI:30616"/>
        <label>1</label>
    </ligand>
</feature>
<feature type="binding site" evidence="1">
    <location>
        <position position="282"/>
    </location>
    <ligand>
        <name>Mg(2+)</name>
        <dbReference type="ChEBI" id="CHEBI:18420"/>
        <label>1</label>
    </ligand>
</feature>
<feature type="binding site" evidence="1">
    <location>
        <position position="282"/>
    </location>
    <ligand>
        <name>Mn(2+)</name>
        <dbReference type="ChEBI" id="CHEBI:29035"/>
        <label>1</label>
    </ligand>
</feature>
<feature type="binding site" evidence="1">
    <location>
        <position position="296"/>
    </location>
    <ligand>
        <name>ATP</name>
        <dbReference type="ChEBI" id="CHEBI:30616"/>
        <label>1</label>
    </ligand>
</feature>
<feature type="binding site" evidence="1">
    <location>
        <position position="296"/>
    </location>
    <ligand>
        <name>Mg(2+)</name>
        <dbReference type="ChEBI" id="CHEBI:18420"/>
        <label>1</label>
    </ligand>
</feature>
<feature type="binding site" evidence="1">
    <location>
        <position position="296"/>
    </location>
    <ligand>
        <name>Mg(2+)</name>
        <dbReference type="ChEBI" id="CHEBI:18420"/>
        <label>2</label>
    </ligand>
</feature>
<feature type="binding site" evidence="1">
    <location>
        <position position="296"/>
    </location>
    <ligand>
        <name>Mn(2+)</name>
        <dbReference type="ChEBI" id="CHEBI:29035"/>
        <label>1</label>
    </ligand>
</feature>
<feature type="binding site" evidence="1">
    <location>
        <position position="296"/>
    </location>
    <ligand>
        <name>Mn(2+)</name>
        <dbReference type="ChEBI" id="CHEBI:29035"/>
        <label>2</label>
    </ligand>
</feature>
<feature type="binding site" evidence="1">
    <location>
        <position position="298"/>
    </location>
    <ligand>
        <name>Mg(2+)</name>
        <dbReference type="ChEBI" id="CHEBI:18420"/>
        <label>2</label>
    </ligand>
</feature>
<feature type="binding site" evidence="1">
    <location>
        <position position="298"/>
    </location>
    <ligand>
        <name>Mn(2+)</name>
        <dbReference type="ChEBI" id="CHEBI:29035"/>
        <label>2</label>
    </ligand>
</feature>
<feature type="binding site" evidence="1">
    <location>
        <position position="709"/>
    </location>
    <ligand>
        <name>ATP</name>
        <dbReference type="ChEBI" id="CHEBI:30616"/>
        <label>2</label>
    </ligand>
</feature>
<feature type="binding site" evidence="1">
    <location>
        <position position="748"/>
    </location>
    <ligand>
        <name>ATP</name>
        <dbReference type="ChEBI" id="CHEBI:30616"/>
        <label>2</label>
    </ligand>
</feature>
<feature type="binding site" evidence="1">
    <location>
        <position position="750"/>
    </location>
    <ligand>
        <name>ATP</name>
        <dbReference type="ChEBI" id="CHEBI:30616"/>
        <label>2</label>
    </ligand>
</feature>
<feature type="binding site" evidence="1">
    <location>
        <position position="755"/>
    </location>
    <ligand>
        <name>ATP</name>
        <dbReference type="ChEBI" id="CHEBI:30616"/>
        <label>2</label>
    </ligand>
</feature>
<feature type="binding site" evidence="1">
    <location>
        <position position="779"/>
    </location>
    <ligand>
        <name>ATP</name>
        <dbReference type="ChEBI" id="CHEBI:30616"/>
        <label>2</label>
    </ligand>
</feature>
<feature type="binding site" evidence="1">
    <location>
        <position position="780"/>
    </location>
    <ligand>
        <name>ATP</name>
        <dbReference type="ChEBI" id="CHEBI:30616"/>
        <label>2</label>
    </ligand>
</feature>
<feature type="binding site" evidence="1">
    <location>
        <position position="781"/>
    </location>
    <ligand>
        <name>ATP</name>
        <dbReference type="ChEBI" id="CHEBI:30616"/>
        <label>2</label>
    </ligand>
</feature>
<feature type="binding site" evidence="1">
    <location>
        <position position="782"/>
    </location>
    <ligand>
        <name>ATP</name>
        <dbReference type="ChEBI" id="CHEBI:30616"/>
        <label>2</label>
    </ligand>
</feature>
<feature type="binding site" evidence="1">
    <location>
        <position position="822"/>
    </location>
    <ligand>
        <name>ATP</name>
        <dbReference type="ChEBI" id="CHEBI:30616"/>
        <label>2</label>
    </ligand>
</feature>
<feature type="binding site" evidence="1">
    <location>
        <position position="822"/>
    </location>
    <ligand>
        <name>Mg(2+)</name>
        <dbReference type="ChEBI" id="CHEBI:18420"/>
        <label>3</label>
    </ligand>
</feature>
<feature type="binding site" evidence="1">
    <location>
        <position position="822"/>
    </location>
    <ligand>
        <name>Mn(2+)</name>
        <dbReference type="ChEBI" id="CHEBI:29035"/>
        <label>3</label>
    </ligand>
</feature>
<feature type="binding site" evidence="1">
    <location>
        <position position="834"/>
    </location>
    <ligand>
        <name>ATP</name>
        <dbReference type="ChEBI" id="CHEBI:30616"/>
        <label>2</label>
    </ligand>
</feature>
<feature type="binding site" evidence="1">
    <location>
        <position position="834"/>
    </location>
    <ligand>
        <name>Mg(2+)</name>
        <dbReference type="ChEBI" id="CHEBI:18420"/>
        <label>3</label>
    </ligand>
</feature>
<feature type="binding site" evidence="1">
    <location>
        <position position="834"/>
    </location>
    <ligand>
        <name>Mg(2+)</name>
        <dbReference type="ChEBI" id="CHEBI:18420"/>
        <label>4</label>
    </ligand>
</feature>
<feature type="binding site" evidence="1">
    <location>
        <position position="834"/>
    </location>
    <ligand>
        <name>Mn(2+)</name>
        <dbReference type="ChEBI" id="CHEBI:29035"/>
        <label>3</label>
    </ligand>
</feature>
<feature type="binding site" evidence="1">
    <location>
        <position position="834"/>
    </location>
    <ligand>
        <name>Mn(2+)</name>
        <dbReference type="ChEBI" id="CHEBI:29035"/>
        <label>4</label>
    </ligand>
</feature>
<feature type="binding site" evidence="1">
    <location>
        <position position="836"/>
    </location>
    <ligand>
        <name>Mg(2+)</name>
        <dbReference type="ChEBI" id="CHEBI:18420"/>
        <label>4</label>
    </ligand>
</feature>
<feature type="binding site" evidence="1">
    <location>
        <position position="836"/>
    </location>
    <ligand>
        <name>Mn(2+)</name>
        <dbReference type="ChEBI" id="CHEBI:29035"/>
        <label>4</label>
    </ligand>
</feature>
<protein>
    <recommendedName>
        <fullName evidence="1">Carbamoyl phosphate synthase large chain</fullName>
        <ecNumber evidence="1">6.3.4.16</ecNumber>
        <ecNumber evidence="1">6.3.5.5</ecNumber>
    </recommendedName>
    <alternativeName>
        <fullName evidence="1">Carbamoyl phosphate synthetase ammonia chain</fullName>
    </alternativeName>
</protein>
<comment type="function">
    <text evidence="1">Large subunit of the glutamine-dependent carbamoyl phosphate synthetase (CPSase). CPSase catalyzes the formation of carbamoyl phosphate from the ammonia moiety of glutamine, carbonate, and phosphate donated by ATP, constituting the first step of 2 biosynthetic pathways, one leading to arginine and/or urea and the other to pyrimidine nucleotides. The large subunit (synthetase) binds the substrates ammonia (free or transferred from glutamine from the small subunit), hydrogencarbonate and ATP and carries out an ATP-coupled ligase reaction, activating hydrogencarbonate by forming carboxy phosphate which reacts with ammonia to form carbamoyl phosphate.</text>
</comment>
<comment type="catalytic activity">
    <reaction evidence="1">
        <text>hydrogencarbonate + L-glutamine + 2 ATP + H2O = carbamoyl phosphate + L-glutamate + 2 ADP + phosphate + 2 H(+)</text>
        <dbReference type="Rhea" id="RHEA:18633"/>
        <dbReference type="ChEBI" id="CHEBI:15377"/>
        <dbReference type="ChEBI" id="CHEBI:15378"/>
        <dbReference type="ChEBI" id="CHEBI:17544"/>
        <dbReference type="ChEBI" id="CHEBI:29985"/>
        <dbReference type="ChEBI" id="CHEBI:30616"/>
        <dbReference type="ChEBI" id="CHEBI:43474"/>
        <dbReference type="ChEBI" id="CHEBI:58228"/>
        <dbReference type="ChEBI" id="CHEBI:58359"/>
        <dbReference type="ChEBI" id="CHEBI:456216"/>
        <dbReference type="EC" id="6.3.5.5"/>
    </reaction>
</comment>
<comment type="catalytic activity">
    <molecule>Carbamoyl phosphate synthase large chain</molecule>
    <reaction evidence="1">
        <text>hydrogencarbonate + NH4(+) + 2 ATP = carbamoyl phosphate + 2 ADP + phosphate + 2 H(+)</text>
        <dbReference type="Rhea" id="RHEA:18029"/>
        <dbReference type="ChEBI" id="CHEBI:15378"/>
        <dbReference type="ChEBI" id="CHEBI:17544"/>
        <dbReference type="ChEBI" id="CHEBI:28938"/>
        <dbReference type="ChEBI" id="CHEBI:30616"/>
        <dbReference type="ChEBI" id="CHEBI:43474"/>
        <dbReference type="ChEBI" id="CHEBI:58228"/>
        <dbReference type="ChEBI" id="CHEBI:456216"/>
        <dbReference type="EC" id="6.3.4.16"/>
    </reaction>
</comment>
<comment type="cofactor">
    <cofactor evidence="1">
        <name>Mg(2+)</name>
        <dbReference type="ChEBI" id="CHEBI:18420"/>
    </cofactor>
    <cofactor evidence="1">
        <name>Mn(2+)</name>
        <dbReference type="ChEBI" id="CHEBI:29035"/>
    </cofactor>
    <text evidence="1">Binds 4 Mg(2+) or Mn(2+) ions per subunit.</text>
</comment>
<comment type="pathway">
    <text evidence="1">Amino-acid biosynthesis; L-arginine biosynthesis; carbamoyl phosphate from bicarbonate: step 1/1.</text>
</comment>
<comment type="pathway">
    <text evidence="1">Pyrimidine metabolism; UMP biosynthesis via de novo pathway; (S)-dihydroorotate from bicarbonate: step 1/3.</text>
</comment>
<comment type="subunit">
    <text evidence="1">Composed of two chains; the small (or glutamine) chain promotes the hydrolysis of glutamine to ammonia, which is used by the large (or ammonia) chain to synthesize carbamoyl phosphate. Tetramer of heterodimers (alpha,beta)4.</text>
</comment>
<comment type="domain">
    <text evidence="1">The large subunit is composed of 2 ATP-grasp domains that are involved in binding the 2 ATP molecules needed for carbamoyl phosphate synthesis. The N-terminal ATP-grasp domain (referred to as the carboxyphosphate synthetic component) catalyzes the ATP-dependent phosphorylation of hydrogencarbonate to carboxyphosphate and the subsequent nucleophilic attack by ammonia to form a carbamate intermediate. The C-terminal ATP-grasp domain (referred to as the carbamoyl phosphate synthetic component) then catalyzes the phosphorylation of carbamate with the second ATP to form the end product carbamoyl phosphate. The reactive and unstable enzyme intermediates are sequentially channeled from one active site to the next through the interior of the protein over a distance of at least 96 A.</text>
</comment>
<comment type="similarity">
    <text evidence="1">Belongs to the CarB family.</text>
</comment>
<organism>
    <name type="scientific">Saccharolobus islandicus (strain M.14.25 / Kamchatka #1)</name>
    <name type="common">Sulfolobus islandicus</name>
    <dbReference type="NCBI Taxonomy" id="427317"/>
    <lineage>
        <taxon>Archaea</taxon>
        <taxon>Thermoproteota</taxon>
        <taxon>Thermoprotei</taxon>
        <taxon>Sulfolobales</taxon>
        <taxon>Sulfolobaceae</taxon>
        <taxon>Saccharolobus</taxon>
    </lineage>
</organism>
<keyword id="KW-0028">Amino-acid biosynthesis</keyword>
<keyword id="KW-0055">Arginine biosynthesis</keyword>
<keyword id="KW-0067">ATP-binding</keyword>
<keyword id="KW-0436">Ligase</keyword>
<keyword id="KW-0460">Magnesium</keyword>
<keyword id="KW-0464">Manganese</keyword>
<keyword id="KW-0479">Metal-binding</keyword>
<keyword id="KW-0547">Nucleotide-binding</keyword>
<keyword id="KW-0665">Pyrimidine biosynthesis</keyword>
<keyword id="KW-0677">Repeat</keyword>
<dbReference type="EC" id="6.3.4.16" evidence="1"/>
<dbReference type="EC" id="6.3.5.5" evidence="1"/>
<dbReference type="EMBL" id="CP001400">
    <property type="protein sequence ID" value="ACP38243.1"/>
    <property type="molecule type" value="Genomic_DNA"/>
</dbReference>
<dbReference type="RefSeq" id="WP_012711488.1">
    <property type="nucleotide sequence ID" value="NC_012588.1"/>
</dbReference>
<dbReference type="SMR" id="C3MW21"/>
<dbReference type="GeneID" id="84058900"/>
<dbReference type="KEGG" id="sia:M1425_1493"/>
<dbReference type="HOGENOM" id="CLU_000513_1_3_2"/>
<dbReference type="UniPathway" id="UPA00068">
    <property type="reaction ID" value="UER00171"/>
</dbReference>
<dbReference type="UniPathway" id="UPA00070">
    <property type="reaction ID" value="UER00115"/>
</dbReference>
<dbReference type="Proteomes" id="UP000001350">
    <property type="component" value="Chromosome"/>
</dbReference>
<dbReference type="GO" id="GO:0005737">
    <property type="term" value="C:cytoplasm"/>
    <property type="evidence" value="ECO:0007669"/>
    <property type="project" value="TreeGrafter"/>
</dbReference>
<dbReference type="GO" id="GO:0005524">
    <property type="term" value="F:ATP binding"/>
    <property type="evidence" value="ECO:0007669"/>
    <property type="project" value="UniProtKB-UniRule"/>
</dbReference>
<dbReference type="GO" id="GO:0004087">
    <property type="term" value="F:carbamoyl-phosphate synthase (ammonia) activity"/>
    <property type="evidence" value="ECO:0007669"/>
    <property type="project" value="RHEA"/>
</dbReference>
<dbReference type="GO" id="GO:0004088">
    <property type="term" value="F:carbamoyl-phosphate synthase (glutamine-hydrolyzing) activity"/>
    <property type="evidence" value="ECO:0007669"/>
    <property type="project" value="UniProtKB-UniRule"/>
</dbReference>
<dbReference type="GO" id="GO:0046872">
    <property type="term" value="F:metal ion binding"/>
    <property type="evidence" value="ECO:0007669"/>
    <property type="project" value="UniProtKB-KW"/>
</dbReference>
<dbReference type="GO" id="GO:0044205">
    <property type="term" value="P:'de novo' UMP biosynthetic process"/>
    <property type="evidence" value="ECO:0007669"/>
    <property type="project" value="UniProtKB-UniRule"/>
</dbReference>
<dbReference type="GO" id="GO:0006541">
    <property type="term" value="P:glutamine metabolic process"/>
    <property type="evidence" value="ECO:0007669"/>
    <property type="project" value="TreeGrafter"/>
</dbReference>
<dbReference type="GO" id="GO:0006526">
    <property type="term" value="P:L-arginine biosynthetic process"/>
    <property type="evidence" value="ECO:0007669"/>
    <property type="project" value="UniProtKB-UniRule"/>
</dbReference>
<dbReference type="FunFam" id="1.10.1030.10:FF:000002">
    <property type="entry name" value="Carbamoyl-phosphate synthase large chain"/>
    <property type="match status" value="1"/>
</dbReference>
<dbReference type="FunFam" id="3.30.1490.20:FF:000001">
    <property type="entry name" value="Carbamoyl-phosphate synthase large chain"/>
    <property type="match status" value="1"/>
</dbReference>
<dbReference type="FunFam" id="3.30.470.20:FF:000001">
    <property type="entry name" value="Carbamoyl-phosphate synthase large chain"/>
    <property type="match status" value="1"/>
</dbReference>
<dbReference type="FunFam" id="3.30.470.20:FF:000026">
    <property type="entry name" value="Carbamoyl-phosphate synthase large chain"/>
    <property type="match status" value="1"/>
</dbReference>
<dbReference type="FunFam" id="3.40.50.20:FF:000001">
    <property type="entry name" value="Carbamoyl-phosphate synthase large chain"/>
    <property type="match status" value="2"/>
</dbReference>
<dbReference type="Gene3D" id="3.40.50.20">
    <property type="match status" value="2"/>
</dbReference>
<dbReference type="Gene3D" id="3.30.1490.20">
    <property type="entry name" value="ATP-grasp fold, A domain"/>
    <property type="match status" value="1"/>
</dbReference>
<dbReference type="Gene3D" id="3.30.470.20">
    <property type="entry name" value="ATP-grasp fold, B domain"/>
    <property type="match status" value="2"/>
</dbReference>
<dbReference type="Gene3D" id="1.10.1030.10">
    <property type="entry name" value="Carbamoyl-phosphate synthetase, large subunit oligomerisation domain"/>
    <property type="match status" value="1"/>
</dbReference>
<dbReference type="HAMAP" id="MF_01210_A">
    <property type="entry name" value="CPSase_L_chain_A"/>
    <property type="match status" value="1"/>
</dbReference>
<dbReference type="InterPro" id="IPR011761">
    <property type="entry name" value="ATP-grasp"/>
</dbReference>
<dbReference type="InterPro" id="IPR013815">
    <property type="entry name" value="ATP_grasp_subdomain_1"/>
</dbReference>
<dbReference type="InterPro" id="IPR006275">
    <property type="entry name" value="CarbamoylP_synth_lsu"/>
</dbReference>
<dbReference type="InterPro" id="IPR005480">
    <property type="entry name" value="CarbamoylP_synth_lsu_oligo"/>
</dbReference>
<dbReference type="InterPro" id="IPR036897">
    <property type="entry name" value="CarbamoylP_synth_lsu_oligo_sf"/>
</dbReference>
<dbReference type="InterPro" id="IPR005479">
    <property type="entry name" value="CbamoylP_synth_lsu-like_ATP-bd"/>
</dbReference>
<dbReference type="InterPro" id="IPR005483">
    <property type="entry name" value="CbamoylP_synth_lsu_CPSase_dom"/>
</dbReference>
<dbReference type="InterPro" id="IPR011607">
    <property type="entry name" value="MGS-like_dom"/>
</dbReference>
<dbReference type="InterPro" id="IPR016185">
    <property type="entry name" value="PreATP-grasp_dom_sf"/>
</dbReference>
<dbReference type="NCBIfam" id="TIGR01369">
    <property type="entry name" value="CPSaseII_lrg"/>
    <property type="match status" value="1"/>
</dbReference>
<dbReference type="NCBIfam" id="NF003671">
    <property type="entry name" value="PRK05294.1"/>
    <property type="match status" value="1"/>
</dbReference>
<dbReference type="NCBIfam" id="NF009455">
    <property type="entry name" value="PRK12815.1"/>
    <property type="match status" value="1"/>
</dbReference>
<dbReference type="PANTHER" id="PTHR11405:SF53">
    <property type="entry name" value="CARBAMOYL-PHOSPHATE SYNTHASE [AMMONIA], MITOCHONDRIAL"/>
    <property type="match status" value="1"/>
</dbReference>
<dbReference type="PANTHER" id="PTHR11405">
    <property type="entry name" value="CARBAMOYLTRANSFERASE FAMILY MEMBER"/>
    <property type="match status" value="1"/>
</dbReference>
<dbReference type="Pfam" id="PF02786">
    <property type="entry name" value="CPSase_L_D2"/>
    <property type="match status" value="2"/>
</dbReference>
<dbReference type="Pfam" id="PF02787">
    <property type="entry name" value="CPSase_L_D3"/>
    <property type="match status" value="1"/>
</dbReference>
<dbReference type="PRINTS" id="PR00098">
    <property type="entry name" value="CPSASE"/>
</dbReference>
<dbReference type="SMART" id="SM01096">
    <property type="entry name" value="CPSase_L_D3"/>
    <property type="match status" value="1"/>
</dbReference>
<dbReference type="SUPFAM" id="SSF48108">
    <property type="entry name" value="Carbamoyl phosphate synthetase, large subunit connection domain"/>
    <property type="match status" value="1"/>
</dbReference>
<dbReference type="SUPFAM" id="SSF56059">
    <property type="entry name" value="Glutathione synthetase ATP-binding domain-like"/>
    <property type="match status" value="2"/>
</dbReference>
<dbReference type="SUPFAM" id="SSF52440">
    <property type="entry name" value="PreATP-grasp domain"/>
    <property type="match status" value="2"/>
</dbReference>
<dbReference type="PROSITE" id="PS50975">
    <property type="entry name" value="ATP_GRASP"/>
    <property type="match status" value="2"/>
</dbReference>
<dbReference type="PROSITE" id="PS00867">
    <property type="entry name" value="CPSASE_2"/>
    <property type="match status" value="1"/>
</dbReference>
<dbReference type="PROSITE" id="PS51855">
    <property type="entry name" value="MGS"/>
    <property type="match status" value="1"/>
</dbReference>
<sequence>MKETPKKVLVIGSGPIKIAEAAEFDYSGSQALKALKEEGIETVLVNSNVATVQTSKKFADKLYMLPVVWWAVEKVIEKERPDGIMIGFGGQTALNVGVDLHKKGVLQKYGVKVLGTQIDGIEKALSREKFRETMIENNLPVPPSLSARSEEEAIKNAKIVGYPVMVRVSFNLGGRGSMVAWTEEDLKKNIRRALSQSYIGEVLIEKYLYHWIELEYEVMRDKKGNSAVIACIENLDPMGVHTGESTVVAPCQTLDNLEYQNMRTYTIEVARSINLIGECNVQFALNPRGYEYYIIETNPRMSRSSALASKATGYPLAYVSAKLALGYELHEVINKVSGRTCACFEPSLDYIVTKIPRWDLSKFENVDQSLATEMMSVGEVMSIGRSFEESLQKAVRMLDIGEPGVVGGKIYEAKMSKVEALKYLKERRPYWFLYVAKAFKEGATIDEVYEVTGISKFFLNKIKGLVDFYETLKILKEIDEETLKLAKKLGFSDEQISKALNKSTEYVRKIRDQSNIIPVVKLIDTLAGEWPSVTNYMYLTYNGTEDDLEFSQGNKLLIVGAGGFRIGVSVEFDWSVVSLMEAASKYFDEVAVLNYNPETVSTDWDIARKLYFDEINVERVLDLIKKEKFRYVATFSGGQIGNSIAKELEENGVRLLGTSGSSVDIAENREKFSKLLDKLGISQPNWVSATSLEEIKKFVNEVGFPVLVRPSYVLSGSSMKIAYSEEELYEYVRRATEISPKYPVVISKYIENAIEAEVDGVSDGNRVLGITLEHVEEAGVHSGDATMSIPFRKLSENSVNKMRENVLSLARELNIKGPFNVQFVVKDNTPHIIELNLRASRSMPFSSKAKGINLINESMKAIFNGLDFSEDYYEPPSKYWAVKSPQFSWSQLRGTYPFLGPEMKSTGEAASFGVTFYDALLKSWLSSIPNRIPNKNGIALVYGDKNLDYLKDTAVNLVKFGLTVYSISELPLQGIETIDKTKAEELVRAKKVEIVVTDGYLKKFDYNIRRTAVDYNIPVILNGRLGYEVSKAFLDYDSLTFFEISEYGGGI</sequence>
<accession>C3MW21</accession>
<gene>
    <name evidence="1" type="primary">carB</name>
    <name type="ordered locus">M1425_1493</name>
</gene>
<evidence type="ECO:0000255" key="1">
    <source>
        <dbReference type="HAMAP-Rule" id="MF_01210"/>
    </source>
</evidence>
<reference key="1">
    <citation type="journal article" date="2009" name="Proc. Natl. Acad. Sci. U.S.A.">
        <title>Biogeography of the Sulfolobus islandicus pan-genome.</title>
        <authorList>
            <person name="Reno M.L."/>
            <person name="Held N.L."/>
            <person name="Fields C.J."/>
            <person name="Burke P.V."/>
            <person name="Whitaker R.J."/>
        </authorList>
    </citation>
    <scope>NUCLEOTIDE SEQUENCE [LARGE SCALE GENOMIC DNA]</scope>
    <source>
        <strain>M.14.25 / Kamchatka #1</strain>
    </source>
</reference>
<name>CARB_SACI4</name>
<proteinExistence type="inferred from homology"/>